<keyword id="KW-1185">Reference proteome</keyword>
<keyword id="KW-0687">Ribonucleoprotein</keyword>
<keyword id="KW-0689">Ribosomal protein</keyword>
<keyword id="KW-0694">RNA-binding</keyword>
<keyword id="KW-0699">rRNA-binding</keyword>
<gene>
    <name evidence="1" type="primary">rpl14</name>
    <name type="ordered locus">APE_0359</name>
</gene>
<protein>
    <recommendedName>
        <fullName evidence="1">Large ribosomal subunit protein uL14</fullName>
    </recommendedName>
    <alternativeName>
        <fullName evidence="2">50S ribosomal protein L14</fullName>
    </alternativeName>
</protein>
<name>RL14_AERPE</name>
<evidence type="ECO:0000255" key="1">
    <source>
        <dbReference type="HAMAP-Rule" id="MF_01367"/>
    </source>
</evidence>
<evidence type="ECO:0000305" key="2"/>
<sequence>MAKKKKYGVVVSRYGVNTGLQVGSYVPVADNSGAKEVMIISVPQVKTRLRRLPSAGVGDLVVVSVKKGTPQMRRQVVYAVVVRQRRPFRRPDGTWVSFEDNAVVIVNPDGTPRGSEVRGPIAREAAERWPRVAKIATMIV</sequence>
<comment type="function">
    <text evidence="1">Binds to 23S rRNA. Forms part of two intersubunit bridges in the 70S ribosome.</text>
</comment>
<comment type="subunit">
    <text evidence="1">Part of the 50S ribosomal subunit. Forms a cluster with proteins L3 and L24e, part of which may contact the 16S rRNA in 2 intersubunit bridges.</text>
</comment>
<comment type="similarity">
    <text evidence="1">Belongs to the universal ribosomal protein uL14 family.</text>
</comment>
<proteinExistence type="inferred from homology"/>
<reference key="1">
    <citation type="journal article" date="1999" name="DNA Res.">
        <title>Complete genome sequence of an aerobic hyper-thermophilic crenarchaeon, Aeropyrum pernix K1.</title>
        <authorList>
            <person name="Kawarabayasi Y."/>
            <person name="Hino Y."/>
            <person name="Horikawa H."/>
            <person name="Yamazaki S."/>
            <person name="Haikawa Y."/>
            <person name="Jin-no K."/>
            <person name="Takahashi M."/>
            <person name="Sekine M."/>
            <person name="Baba S."/>
            <person name="Ankai A."/>
            <person name="Kosugi H."/>
            <person name="Hosoyama A."/>
            <person name="Fukui S."/>
            <person name="Nagai Y."/>
            <person name="Nishijima K."/>
            <person name="Nakazawa H."/>
            <person name="Takamiya M."/>
            <person name="Masuda S."/>
            <person name="Funahashi T."/>
            <person name="Tanaka T."/>
            <person name="Kudoh Y."/>
            <person name="Yamazaki J."/>
            <person name="Kushida N."/>
            <person name="Oguchi A."/>
            <person name="Aoki K."/>
            <person name="Kubota K."/>
            <person name="Nakamura Y."/>
            <person name="Nomura N."/>
            <person name="Sako Y."/>
            <person name="Kikuchi H."/>
        </authorList>
    </citation>
    <scope>NUCLEOTIDE SEQUENCE [LARGE SCALE GENOMIC DNA]</scope>
    <source>
        <strain>ATCC 700893 / DSM 11879 / JCM 9820 / NBRC 100138 / K1</strain>
    </source>
</reference>
<feature type="chain" id="PRO_0000128569" description="Large ribosomal subunit protein uL14">
    <location>
        <begin position="1"/>
        <end position="140"/>
    </location>
</feature>
<accession>Q9YF82</accession>
<organism>
    <name type="scientific">Aeropyrum pernix (strain ATCC 700893 / DSM 11879 / JCM 9820 / NBRC 100138 / K1)</name>
    <dbReference type="NCBI Taxonomy" id="272557"/>
    <lineage>
        <taxon>Archaea</taxon>
        <taxon>Thermoproteota</taxon>
        <taxon>Thermoprotei</taxon>
        <taxon>Desulfurococcales</taxon>
        <taxon>Desulfurococcaceae</taxon>
        <taxon>Aeropyrum</taxon>
    </lineage>
</organism>
<dbReference type="EMBL" id="BA000002">
    <property type="protein sequence ID" value="BAA79314.1"/>
    <property type="molecule type" value="Genomic_DNA"/>
</dbReference>
<dbReference type="PIR" id="F72727">
    <property type="entry name" value="F72727"/>
</dbReference>
<dbReference type="RefSeq" id="WP_010865690.1">
    <property type="nucleotide sequence ID" value="NC_000854.2"/>
</dbReference>
<dbReference type="SMR" id="Q9YF82"/>
<dbReference type="STRING" id="272557.APE_0359"/>
<dbReference type="EnsemblBacteria" id="BAA79314">
    <property type="protein sequence ID" value="BAA79314"/>
    <property type="gene ID" value="APE_0359"/>
</dbReference>
<dbReference type="GeneID" id="1444573"/>
<dbReference type="KEGG" id="ape:APE_0359"/>
<dbReference type="PATRIC" id="fig|272557.25.peg.276"/>
<dbReference type="eggNOG" id="arCOG04095">
    <property type="taxonomic scope" value="Archaea"/>
</dbReference>
<dbReference type="Proteomes" id="UP000002518">
    <property type="component" value="Chromosome"/>
</dbReference>
<dbReference type="GO" id="GO:0022625">
    <property type="term" value="C:cytosolic large ribosomal subunit"/>
    <property type="evidence" value="ECO:0007669"/>
    <property type="project" value="TreeGrafter"/>
</dbReference>
<dbReference type="GO" id="GO:0070180">
    <property type="term" value="F:large ribosomal subunit rRNA binding"/>
    <property type="evidence" value="ECO:0007669"/>
    <property type="project" value="TreeGrafter"/>
</dbReference>
<dbReference type="GO" id="GO:0003735">
    <property type="term" value="F:structural constituent of ribosome"/>
    <property type="evidence" value="ECO:0007669"/>
    <property type="project" value="InterPro"/>
</dbReference>
<dbReference type="GO" id="GO:0006412">
    <property type="term" value="P:translation"/>
    <property type="evidence" value="ECO:0007669"/>
    <property type="project" value="UniProtKB-UniRule"/>
</dbReference>
<dbReference type="CDD" id="cd00337">
    <property type="entry name" value="Ribosomal_uL14"/>
    <property type="match status" value="1"/>
</dbReference>
<dbReference type="FunFam" id="2.40.150.20:FF:000007">
    <property type="entry name" value="50S ribosomal protein L14"/>
    <property type="match status" value="1"/>
</dbReference>
<dbReference type="Gene3D" id="2.40.150.20">
    <property type="entry name" value="Ribosomal protein L14"/>
    <property type="match status" value="1"/>
</dbReference>
<dbReference type="HAMAP" id="MF_01367">
    <property type="entry name" value="Ribosomal_uL14"/>
    <property type="match status" value="1"/>
</dbReference>
<dbReference type="InterPro" id="IPR000218">
    <property type="entry name" value="Ribosomal_uL14"/>
</dbReference>
<dbReference type="InterPro" id="IPR019971">
    <property type="entry name" value="Ribosomal_uL14_arc"/>
</dbReference>
<dbReference type="InterPro" id="IPR019972">
    <property type="entry name" value="Ribosomal_uL14_CS"/>
</dbReference>
<dbReference type="InterPro" id="IPR036853">
    <property type="entry name" value="Ribosomal_uL14_sf"/>
</dbReference>
<dbReference type="NCBIfam" id="NF006344">
    <property type="entry name" value="PRK08571.1"/>
    <property type="match status" value="1"/>
</dbReference>
<dbReference type="NCBIfam" id="TIGR03673">
    <property type="entry name" value="uL14_arch"/>
    <property type="match status" value="1"/>
</dbReference>
<dbReference type="PANTHER" id="PTHR11761">
    <property type="entry name" value="50S/60S RIBOSOMAL PROTEIN L14/L23"/>
    <property type="match status" value="1"/>
</dbReference>
<dbReference type="PANTHER" id="PTHR11761:SF8">
    <property type="entry name" value="LARGE RIBOSOMAL SUBUNIT PROTEIN UL14"/>
    <property type="match status" value="1"/>
</dbReference>
<dbReference type="Pfam" id="PF00238">
    <property type="entry name" value="Ribosomal_L14"/>
    <property type="match status" value="1"/>
</dbReference>
<dbReference type="SMART" id="SM01374">
    <property type="entry name" value="Ribosomal_L14"/>
    <property type="match status" value="1"/>
</dbReference>
<dbReference type="SUPFAM" id="SSF50193">
    <property type="entry name" value="Ribosomal protein L14"/>
    <property type="match status" value="1"/>
</dbReference>
<dbReference type="PROSITE" id="PS00049">
    <property type="entry name" value="RIBOSOMAL_L14"/>
    <property type="match status" value="1"/>
</dbReference>